<dbReference type="EMBL" id="AF169227">
    <property type="protein sequence ID" value="AAF25796.1"/>
    <property type="molecule type" value="mRNA"/>
</dbReference>
<dbReference type="EMBL" id="AE014135">
    <property type="protein sequence ID" value="AAF59330.2"/>
    <property type="molecule type" value="Genomic_DNA"/>
</dbReference>
<dbReference type="RefSeq" id="NP_001259065.1">
    <property type="nucleotide sequence ID" value="NM_001272136.1"/>
</dbReference>
<dbReference type="RefSeq" id="NP_524842.2">
    <property type="nucleotide sequence ID" value="NM_080103.3"/>
</dbReference>
<dbReference type="SMR" id="Q9NJB5"/>
<dbReference type="BioGRID" id="69903">
    <property type="interactions" value="7"/>
</dbReference>
<dbReference type="FunCoup" id="Q9NJB5">
    <property type="interactions" value="53"/>
</dbReference>
<dbReference type="IntAct" id="Q9NJB5">
    <property type="interactions" value="5"/>
</dbReference>
<dbReference type="STRING" id="7227.FBpp0088173"/>
<dbReference type="GlyGen" id="Q9NJB5">
    <property type="glycosylation" value="1 site"/>
</dbReference>
<dbReference type="PaxDb" id="7227-FBpp0302730"/>
<dbReference type="EnsemblMetazoa" id="FBtr0089104">
    <property type="protein sequence ID" value="FBpp0088173"/>
    <property type="gene ID" value="FBgn0028996"/>
</dbReference>
<dbReference type="EnsemblMetazoa" id="FBtr0310610">
    <property type="protein sequence ID" value="FBpp0302730"/>
    <property type="gene ID" value="FBgn0028996"/>
</dbReference>
<dbReference type="GeneID" id="45816"/>
<dbReference type="KEGG" id="dme:Dmel_CG1922"/>
<dbReference type="UCSC" id="CG1922-RA">
    <property type="organism name" value="d. melanogaster"/>
</dbReference>
<dbReference type="AGR" id="FB:FBgn0028996"/>
<dbReference type="CTD" id="45816"/>
<dbReference type="FlyBase" id="FBgn0028996">
    <property type="gene designation" value="onecut"/>
</dbReference>
<dbReference type="VEuPathDB" id="VectorBase:FBgn0028996"/>
<dbReference type="eggNOG" id="KOG2252">
    <property type="taxonomic scope" value="Eukaryota"/>
</dbReference>
<dbReference type="GeneTree" id="ENSGT00950000183103"/>
<dbReference type="HOGENOM" id="CLU_296520_0_0_1"/>
<dbReference type="InParanoid" id="Q9NJB5"/>
<dbReference type="OMA" id="PMHHADE"/>
<dbReference type="OrthoDB" id="10068888at2759"/>
<dbReference type="PhylomeDB" id="Q9NJB5"/>
<dbReference type="BioGRID-ORCS" id="45816">
    <property type="hits" value="0 hits in 3 CRISPR screens"/>
</dbReference>
<dbReference type="GenomeRNAi" id="45816"/>
<dbReference type="PRO" id="PR:Q9NJB5"/>
<dbReference type="Proteomes" id="UP000000803">
    <property type="component" value="Chromosome 4"/>
</dbReference>
<dbReference type="Bgee" id="FBgn0028996">
    <property type="expression patterns" value="Expressed in photoreceptor cell R7 (Drosophila) in insect head and 193 other cell types or tissues"/>
</dbReference>
<dbReference type="ExpressionAtlas" id="Q9NJB5">
    <property type="expression patterns" value="baseline and differential"/>
</dbReference>
<dbReference type="GO" id="GO:0005634">
    <property type="term" value="C:nucleus"/>
    <property type="evidence" value="ECO:0000314"/>
    <property type="project" value="FlyBase"/>
</dbReference>
<dbReference type="GO" id="GO:0001228">
    <property type="term" value="F:DNA-binding transcription activator activity, RNA polymerase II-specific"/>
    <property type="evidence" value="ECO:0000314"/>
    <property type="project" value="FlyBase"/>
</dbReference>
<dbReference type="GO" id="GO:0000981">
    <property type="term" value="F:DNA-binding transcription factor activity, RNA polymerase II-specific"/>
    <property type="evidence" value="ECO:0000318"/>
    <property type="project" value="GO_Central"/>
</dbReference>
<dbReference type="GO" id="GO:0000978">
    <property type="term" value="F:RNA polymerase II cis-regulatory region sequence-specific DNA binding"/>
    <property type="evidence" value="ECO:0000318"/>
    <property type="project" value="GO_Central"/>
</dbReference>
<dbReference type="GO" id="GO:0045944">
    <property type="term" value="P:positive regulation of transcription by RNA polymerase II"/>
    <property type="evidence" value="ECO:0000314"/>
    <property type="project" value="FlyBase"/>
</dbReference>
<dbReference type="GO" id="GO:0006357">
    <property type="term" value="P:regulation of transcription by RNA polymerase II"/>
    <property type="evidence" value="ECO:0000318"/>
    <property type="project" value="GO_Central"/>
</dbReference>
<dbReference type="CDD" id="cd00086">
    <property type="entry name" value="homeodomain"/>
    <property type="match status" value="1"/>
</dbReference>
<dbReference type="FunFam" id="1.10.10.60:FF:000054">
    <property type="entry name" value="One cut domain family member"/>
    <property type="match status" value="1"/>
</dbReference>
<dbReference type="FunFam" id="1.10.260.40:FF:000005">
    <property type="entry name" value="One cut domain family member"/>
    <property type="match status" value="1"/>
</dbReference>
<dbReference type="Gene3D" id="1.10.10.60">
    <property type="entry name" value="Homeodomain-like"/>
    <property type="match status" value="1"/>
</dbReference>
<dbReference type="Gene3D" id="1.10.260.40">
    <property type="entry name" value="lambda repressor-like DNA-binding domains"/>
    <property type="match status" value="1"/>
</dbReference>
<dbReference type="InterPro" id="IPR003350">
    <property type="entry name" value="CUT_dom"/>
</dbReference>
<dbReference type="InterPro" id="IPR051649">
    <property type="entry name" value="CUT_Homeobox"/>
</dbReference>
<dbReference type="InterPro" id="IPR001356">
    <property type="entry name" value="HD"/>
</dbReference>
<dbReference type="InterPro" id="IPR009057">
    <property type="entry name" value="Homeodomain-like_sf"/>
</dbReference>
<dbReference type="InterPro" id="IPR010982">
    <property type="entry name" value="Lambda_DNA-bd_dom_sf"/>
</dbReference>
<dbReference type="PANTHER" id="PTHR14057:SF47">
    <property type="entry name" value="HOMEOBOX PROTEIN ONECUT"/>
    <property type="match status" value="1"/>
</dbReference>
<dbReference type="PANTHER" id="PTHR14057">
    <property type="entry name" value="TRANSCRIPTION FACTOR ONECUT"/>
    <property type="match status" value="1"/>
</dbReference>
<dbReference type="Pfam" id="PF02376">
    <property type="entry name" value="CUT"/>
    <property type="match status" value="1"/>
</dbReference>
<dbReference type="Pfam" id="PF00046">
    <property type="entry name" value="Homeodomain"/>
    <property type="match status" value="1"/>
</dbReference>
<dbReference type="SMART" id="SM01109">
    <property type="entry name" value="CUT"/>
    <property type="match status" value="1"/>
</dbReference>
<dbReference type="SMART" id="SM00389">
    <property type="entry name" value="HOX"/>
    <property type="match status" value="1"/>
</dbReference>
<dbReference type="SUPFAM" id="SSF46689">
    <property type="entry name" value="Homeodomain-like"/>
    <property type="match status" value="1"/>
</dbReference>
<dbReference type="SUPFAM" id="SSF47413">
    <property type="entry name" value="lambda repressor-like DNA-binding domains"/>
    <property type="match status" value="1"/>
</dbReference>
<dbReference type="PROSITE" id="PS51042">
    <property type="entry name" value="CUT"/>
    <property type="match status" value="1"/>
</dbReference>
<dbReference type="PROSITE" id="PS50071">
    <property type="entry name" value="HOMEOBOX_2"/>
    <property type="match status" value="1"/>
</dbReference>
<accession>Q9NJB5</accession>
<accession>Q9V4E4</accession>
<comment type="function">
    <text>Transcriptional regulator. Binds and recognize ATTG sites.</text>
</comment>
<comment type="subcellular location">
    <subcellularLocation>
        <location>Nucleus</location>
    </subcellularLocation>
</comment>
<comment type="tissue specificity">
    <text>Neural-specific.</text>
</comment>
<comment type="similarity">
    <text evidence="4">Belongs to the CUT homeobox family.</text>
</comment>
<keyword id="KW-0238">DNA-binding</keyword>
<keyword id="KW-0371">Homeobox</keyword>
<keyword id="KW-0539">Nucleus</keyword>
<keyword id="KW-1185">Reference proteome</keyword>
<keyword id="KW-0804">Transcription</keyword>
<keyword id="KW-0805">Transcription regulation</keyword>
<feature type="chain" id="PRO_0000202407" description="Homeobox protein onecut">
    <location>
        <begin position="1"/>
        <end position="1081"/>
    </location>
</feature>
<feature type="DNA-binding region" description="CUT" evidence="2">
    <location>
        <begin position="751"/>
        <end position="837"/>
    </location>
</feature>
<feature type="DNA-binding region" description="Homeobox" evidence="1">
    <location>
        <begin position="918"/>
        <end position="977"/>
    </location>
</feature>
<feature type="region of interest" description="Disordered" evidence="3">
    <location>
        <begin position="274"/>
        <end position="326"/>
    </location>
</feature>
<feature type="region of interest" description="Disordered" evidence="3">
    <location>
        <begin position="481"/>
        <end position="504"/>
    </location>
</feature>
<feature type="region of interest" description="Disordered" evidence="3">
    <location>
        <begin position="653"/>
        <end position="688"/>
    </location>
</feature>
<feature type="region of interest" description="Disordered" evidence="3">
    <location>
        <begin position="844"/>
        <end position="875"/>
    </location>
</feature>
<feature type="region of interest" description="Disordered" evidence="3">
    <location>
        <begin position="978"/>
        <end position="1081"/>
    </location>
</feature>
<feature type="compositionally biased region" description="Acidic residues" evidence="3">
    <location>
        <begin position="278"/>
        <end position="301"/>
    </location>
</feature>
<feature type="compositionally biased region" description="Polar residues" evidence="3">
    <location>
        <begin position="311"/>
        <end position="326"/>
    </location>
</feature>
<feature type="compositionally biased region" description="Basic and acidic residues" evidence="3">
    <location>
        <begin position="485"/>
        <end position="499"/>
    </location>
</feature>
<feature type="compositionally biased region" description="Basic and acidic residues" evidence="3">
    <location>
        <begin position="658"/>
        <end position="686"/>
    </location>
</feature>
<feature type="compositionally biased region" description="Low complexity" evidence="3">
    <location>
        <begin position="851"/>
        <end position="867"/>
    </location>
</feature>
<feature type="compositionally biased region" description="Basic and acidic residues" evidence="3">
    <location>
        <begin position="995"/>
        <end position="1006"/>
    </location>
</feature>
<feature type="compositionally biased region" description="Polar residues" evidence="3">
    <location>
        <begin position="1007"/>
        <end position="1041"/>
    </location>
</feature>
<feature type="compositionally biased region" description="Acidic residues" evidence="3">
    <location>
        <begin position="1047"/>
        <end position="1056"/>
    </location>
</feature>
<feature type="compositionally biased region" description="Basic and acidic residues" evidence="3">
    <location>
        <begin position="1057"/>
        <end position="1073"/>
    </location>
</feature>
<feature type="sequence conflict" description="In Ref. 1; AAF25796." evidence="4" ref="1">
    <original>R</original>
    <variation>T</variation>
    <location>
        <position position="104"/>
    </location>
</feature>
<feature type="sequence conflict" description="In Ref. 1; AAF25796." evidence="4" ref="1">
    <original>D</original>
    <variation>H</variation>
    <location>
        <position position="132"/>
    </location>
</feature>
<feature type="sequence conflict" description="In Ref. 1; AAF25796." evidence="4" ref="1">
    <original>R</original>
    <variation>A</variation>
    <location>
        <position position="305"/>
    </location>
</feature>
<feature type="sequence conflict" description="In Ref. 1; AAF25796." evidence="4" ref="1">
    <original>R</original>
    <variation>K</variation>
    <location>
        <position position="497"/>
    </location>
</feature>
<feature type="sequence conflict" description="In Ref. 1; AAF25796." evidence="4" ref="1">
    <original>S</original>
    <variation>R</variation>
    <location>
        <position position="847"/>
    </location>
</feature>
<sequence>MDSLNDIIDHQTFSQELVEDASEFITVGHHSERPSQSSQQPNSGQDLTMSMQDIISCPVKHRTCSASGSGSASGSDSVVMVIDALGQGNRQSAYQIVPQQLQQRNMPLPFGLLERDRQHMQHGREVNTSPVDFVSSDINLDGLTVDADVSQTDHSQETAVKQEQKLLIVQSKSQDQSHRRIRMLVDVSSVNSGLGVHVDDMDEISSDGVGCDDEGVTLSHQHLLEQEEQFGLTSHHPHLQPHTQIIHGLHQRSTHSEMGLDNGHGEVLSVIVHSQDSDKEDCEENDDGDAEGDLENEDDDERDSRSREQLLSHSSYQTLTSVNDRLSSPGFSQTSYATLTPIQPLPPISTMSEKFAYSGHISGGDSGDTDVNGDGAGGGVVEVGEVTNQSSEATGTVSISSGNATSSVCSNNDCSSFSALSMPIGSGHLGLGVLSGVQSPFSSYEKLSSMISPPPNNYLVSCDLHSSVSGRVINSSHLQLSHNGNKKESGTHEHTHRPADVNGGKFSYTGHISRGDSVDNDVNGEKFSFSDHISGGDSGDEDANREKFIYSDHISEGENGPDVNSGTNWLQMHSEREVRLHMPVPAELEARFHISSERRTRLNVPPARGSLSRHLAPNAPICPADWKADDWKHSNAGVVSLTADMPVVVSLTPTPPPLRDDSVSGIKQNERSSPGHREQYFLDKSQEPSSVVADQCSPGINGTPQSVCVIHQQSPSALGNGFQSSSQQAKVSSCASPKGTVSSGGAVSNRIANSSDMEEINTKDLAQRISAELKRYSIPQAIFAQRVLCRSQGTLSDLLRNPKPWSKLKSGRETFRRMYKWLQEPEFQRMSALRMAAAQIPQRAPLSSGMSLGSATGPSGSTGTIPTDLDPHGGPTMIQNPLTNESDSSPASTPVTSVLVGSVVSCRRKEEPQIEQMPQPKKPRLVFTDLQRRTLQAIFKETKRPSKEMQVTIARQLGLEPTTVGNFFMNARRRSMDKWRDDDSKSTMHVAHSRQQQDEQQKDNAHTHSQSQIQDQNHSQNQAIHNSMSQDPYSNLHTTAMSPLGAFDEDADMDLELESHDFDLVDPDEHGDTNDPNGDML</sequence>
<protein>
    <recommendedName>
        <fullName>Homeobox protein onecut</fullName>
    </recommendedName>
</protein>
<evidence type="ECO:0000255" key="1">
    <source>
        <dbReference type="PROSITE-ProRule" id="PRU00108"/>
    </source>
</evidence>
<evidence type="ECO:0000255" key="2">
    <source>
        <dbReference type="PROSITE-ProRule" id="PRU00374"/>
    </source>
</evidence>
<evidence type="ECO:0000256" key="3">
    <source>
        <dbReference type="SAM" id="MobiDB-lite"/>
    </source>
</evidence>
<evidence type="ECO:0000305" key="4"/>
<organism>
    <name type="scientific">Drosophila melanogaster</name>
    <name type="common">Fruit fly</name>
    <dbReference type="NCBI Taxonomy" id="7227"/>
    <lineage>
        <taxon>Eukaryota</taxon>
        <taxon>Metazoa</taxon>
        <taxon>Ecdysozoa</taxon>
        <taxon>Arthropoda</taxon>
        <taxon>Hexapoda</taxon>
        <taxon>Insecta</taxon>
        <taxon>Pterygota</taxon>
        <taxon>Neoptera</taxon>
        <taxon>Endopterygota</taxon>
        <taxon>Diptera</taxon>
        <taxon>Brachycera</taxon>
        <taxon>Muscomorpha</taxon>
        <taxon>Ephydroidea</taxon>
        <taxon>Drosophilidae</taxon>
        <taxon>Drosophila</taxon>
        <taxon>Sophophora</taxon>
    </lineage>
</organism>
<reference key="1">
    <citation type="submission" date="1999-07" db="EMBL/GenBank/DDBJ databases">
        <title>The Drosophila onecut is a neural-specific transcriptional regulator.</title>
        <authorList>
            <person name="Nguyen D.N.T."/>
            <person name="Lai Z.C."/>
        </authorList>
    </citation>
    <scope>NUCLEOTIDE SEQUENCE [MRNA]</scope>
</reference>
<reference key="2">
    <citation type="journal article" date="2000" name="Science">
        <title>The genome sequence of Drosophila melanogaster.</title>
        <authorList>
            <person name="Adams M.D."/>
            <person name="Celniker S.E."/>
            <person name="Holt R.A."/>
            <person name="Evans C.A."/>
            <person name="Gocayne J.D."/>
            <person name="Amanatides P.G."/>
            <person name="Scherer S.E."/>
            <person name="Li P.W."/>
            <person name="Hoskins R.A."/>
            <person name="Galle R.F."/>
            <person name="George R.A."/>
            <person name="Lewis S.E."/>
            <person name="Richards S."/>
            <person name="Ashburner M."/>
            <person name="Henderson S.N."/>
            <person name="Sutton G.G."/>
            <person name="Wortman J.R."/>
            <person name="Yandell M.D."/>
            <person name="Zhang Q."/>
            <person name="Chen L.X."/>
            <person name="Brandon R.C."/>
            <person name="Rogers Y.-H.C."/>
            <person name="Blazej R.G."/>
            <person name="Champe M."/>
            <person name="Pfeiffer B.D."/>
            <person name="Wan K.H."/>
            <person name="Doyle C."/>
            <person name="Baxter E.G."/>
            <person name="Helt G."/>
            <person name="Nelson C.R."/>
            <person name="Miklos G.L.G."/>
            <person name="Abril J.F."/>
            <person name="Agbayani A."/>
            <person name="An H.-J."/>
            <person name="Andrews-Pfannkoch C."/>
            <person name="Baldwin D."/>
            <person name="Ballew R.M."/>
            <person name="Basu A."/>
            <person name="Baxendale J."/>
            <person name="Bayraktaroglu L."/>
            <person name="Beasley E.M."/>
            <person name="Beeson K.Y."/>
            <person name="Benos P.V."/>
            <person name="Berman B.P."/>
            <person name="Bhandari D."/>
            <person name="Bolshakov S."/>
            <person name="Borkova D."/>
            <person name="Botchan M.R."/>
            <person name="Bouck J."/>
            <person name="Brokstein P."/>
            <person name="Brottier P."/>
            <person name="Burtis K.C."/>
            <person name="Busam D.A."/>
            <person name="Butler H."/>
            <person name="Cadieu E."/>
            <person name="Center A."/>
            <person name="Chandra I."/>
            <person name="Cherry J.M."/>
            <person name="Cawley S."/>
            <person name="Dahlke C."/>
            <person name="Davenport L.B."/>
            <person name="Davies P."/>
            <person name="de Pablos B."/>
            <person name="Delcher A."/>
            <person name="Deng Z."/>
            <person name="Mays A.D."/>
            <person name="Dew I."/>
            <person name="Dietz S.M."/>
            <person name="Dodson K."/>
            <person name="Doup L.E."/>
            <person name="Downes M."/>
            <person name="Dugan-Rocha S."/>
            <person name="Dunkov B.C."/>
            <person name="Dunn P."/>
            <person name="Durbin K.J."/>
            <person name="Evangelista C.C."/>
            <person name="Ferraz C."/>
            <person name="Ferriera S."/>
            <person name="Fleischmann W."/>
            <person name="Fosler C."/>
            <person name="Gabrielian A.E."/>
            <person name="Garg N.S."/>
            <person name="Gelbart W.M."/>
            <person name="Glasser K."/>
            <person name="Glodek A."/>
            <person name="Gong F."/>
            <person name="Gorrell J.H."/>
            <person name="Gu Z."/>
            <person name="Guan P."/>
            <person name="Harris M."/>
            <person name="Harris N.L."/>
            <person name="Harvey D.A."/>
            <person name="Heiman T.J."/>
            <person name="Hernandez J.R."/>
            <person name="Houck J."/>
            <person name="Hostin D."/>
            <person name="Houston K.A."/>
            <person name="Howland T.J."/>
            <person name="Wei M.-H."/>
            <person name="Ibegwam C."/>
            <person name="Jalali M."/>
            <person name="Kalush F."/>
            <person name="Karpen G.H."/>
            <person name="Ke Z."/>
            <person name="Kennison J.A."/>
            <person name="Ketchum K.A."/>
            <person name="Kimmel B.E."/>
            <person name="Kodira C.D."/>
            <person name="Kraft C.L."/>
            <person name="Kravitz S."/>
            <person name="Kulp D."/>
            <person name="Lai Z."/>
            <person name="Lasko P."/>
            <person name="Lei Y."/>
            <person name="Levitsky A.A."/>
            <person name="Li J.H."/>
            <person name="Li Z."/>
            <person name="Liang Y."/>
            <person name="Lin X."/>
            <person name="Liu X."/>
            <person name="Mattei B."/>
            <person name="McIntosh T.C."/>
            <person name="McLeod M.P."/>
            <person name="McPherson D."/>
            <person name="Merkulov G."/>
            <person name="Milshina N.V."/>
            <person name="Mobarry C."/>
            <person name="Morris J."/>
            <person name="Moshrefi A."/>
            <person name="Mount S.M."/>
            <person name="Moy M."/>
            <person name="Murphy B."/>
            <person name="Murphy L."/>
            <person name="Muzny D.M."/>
            <person name="Nelson D.L."/>
            <person name="Nelson D.R."/>
            <person name="Nelson K.A."/>
            <person name="Nixon K."/>
            <person name="Nusskern D.R."/>
            <person name="Pacleb J.M."/>
            <person name="Palazzolo M."/>
            <person name="Pittman G.S."/>
            <person name="Pan S."/>
            <person name="Pollard J."/>
            <person name="Puri V."/>
            <person name="Reese M.G."/>
            <person name="Reinert K."/>
            <person name="Remington K."/>
            <person name="Saunders R.D.C."/>
            <person name="Scheeler F."/>
            <person name="Shen H."/>
            <person name="Shue B.C."/>
            <person name="Siden-Kiamos I."/>
            <person name="Simpson M."/>
            <person name="Skupski M.P."/>
            <person name="Smith T.J."/>
            <person name="Spier E."/>
            <person name="Spradling A.C."/>
            <person name="Stapleton M."/>
            <person name="Strong R."/>
            <person name="Sun E."/>
            <person name="Svirskas R."/>
            <person name="Tector C."/>
            <person name="Turner R."/>
            <person name="Venter E."/>
            <person name="Wang A.H."/>
            <person name="Wang X."/>
            <person name="Wang Z.-Y."/>
            <person name="Wassarman D.A."/>
            <person name="Weinstock G.M."/>
            <person name="Weissenbach J."/>
            <person name="Williams S.M."/>
            <person name="Woodage T."/>
            <person name="Worley K.C."/>
            <person name="Wu D."/>
            <person name="Yang S."/>
            <person name="Yao Q.A."/>
            <person name="Ye J."/>
            <person name="Yeh R.-F."/>
            <person name="Zaveri J.S."/>
            <person name="Zhan M."/>
            <person name="Zhang G."/>
            <person name="Zhao Q."/>
            <person name="Zheng L."/>
            <person name="Zheng X.H."/>
            <person name="Zhong F.N."/>
            <person name="Zhong W."/>
            <person name="Zhou X."/>
            <person name="Zhu S.C."/>
            <person name="Zhu X."/>
            <person name="Smith H.O."/>
            <person name="Gibbs R.A."/>
            <person name="Myers E.W."/>
            <person name="Rubin G.M."/>
            <person name="Venter J.C."/>
        </authorList>
    </citation>
    <scope>NUCLEOTIDE SEQUENCE [LARGE SCALE GENOMIC DNA]</scope>
    <source>
        <strain>Berkeley</strain>
    </source>
</reference>
<reference key="3">
    <citation type="journal article" date="2002" name="Genome Biol.">
        <title>Annotation of the Drosophila melanogaster euchromatic genome: a systematic review.</title>
        <authorList>
            <person name="Misra S."/>
            <person name="Crosby M.A."/>
            <person name="Mungall C.J."/>
            <person name="Matthews B.B."/>
            <person name="Campbell K.S."/>
            <person name="Hradecky P."/>
            <person name="Huang Y."/>
            <person name="Kaminker J.S."/>
            <person name="Millburn G.H."/>
            <person name="Prochnik S.E."/>
            <person name="Smith C.D."/>
            <person name="Tupy J.L."/>
            <person name="Whitfield E.J."/>
            <person name="Bayraktaroglu L."/>
            <person name="Berman B.P."/>
            <person name="Bettencourt B.R."/>
            <person name="Celniker S.E."/>
            <person name="de Grey A.D.N.J."/>
            <person name="Drysdale R.A."/>
            <person name="Harris N.L."/>
            <person name="Richter J."/>
            <person name="Russo S."/>
            <person name="Schroeder A.J."/>
            <person name="Shu S.Q."/>
            <person name="Stapleton M."/>
            <person name="Yamada C."/>
            <person name="Ashburner M."/>
            <person name="Gelbart W.M."/>
            <person name="Rubin G.M."/>
            <person name="Lewis S.E."/>
        </authorList>
    </citation>
    <scope>GENOME REANNOTATION</scope>
    <source>
        <strain>Berkeley</strain>
    </source>
</reference>
<name>ONEC_DROME</name>
<proteinExistence type="evidence at transcript level"/>
<gene>
    <name type="primary">onecut</name>
    <name type="ORF">CG1922</name>
</gene>